<name>ATPL1_PELPD</name>
<dbReference type="EMBL" id="CP000482">
    <property type="protein sequence ID" value="ABK98231.1"/>
    <property type="molecule type" value="Genomic_DNA"/>
</dbReference>
<dbReference type="RefSeq" id="WP_011734544.1">
    <property type="nucleotide sequence ID" value="NC_008609.1"/>
</dbReference>
<dbReference type="SMR" id="A1ALL1"/>
<dbReference type="STRING" id="338966.Ppro_0600"/>
<dbReference type="KEGG" id="ppd:Ppro_0600"/>
<dbReference type="eggNOG" id="COG0636">
    <property type="taxonomic scope" value="Bacteria"/>
</dbReference>
<dbReference type="HOGENOM" id="CLU_148047_2_0_7"/>
<dbReference type="OrthoDB" id="5296711at2"/>
<dbReference type="Proteomes" id="UP000006732">
    <property type="component" value="Chromosome"/>
</dbReference>
<dbReference type="GO" id="GO:0005886">
    <property type="term" value="C:plasma membrane"/>
    <property type="evidence" value="ECO:0007669"/>
    <property type="project" value="UniProtKB-SubCell"/>
</dbReference>
<dbReference type="GO" id="GO:0045259">
    <property type="term" value="C:proton-transporting ATP synthase complex"/>
    <property type="evidence" value="ECO:0007669"/>
    <property type="project" value="UniProtKB-KW"/>
</dbReference>
<dbReference type="GO" id="GO:0033177">
    <property type="term" value="C:proton-transporting two-sector ATPase complex, proton-transporting domain"/>
    <property type="evidence" value="ECO:0007669"/>
    <property type="project" value="InterPro"/>
</dbReference>
<dbReference type="GO" id="GO:0008289">
    <property type="term" value="F:lipid binding"/>
    <property type="evidence" value="ECO:0007669"/>
    <property type="project" value="UniProtKB-KW"/>
</dbReference>
<dbReference type="GO" id="GO:0046933">
    <property type="term" value="F:proton-transporting ATP synthase activity, rotational mechanism"/>
    <property type="evidence" value="ECO:0007669"/>
    <property type="project" value="UniProtKB-UniRule"/>
</dbReference>
<dbReference type="CDD" id="cd18121">
    <property type="entry name" value="ATP-synt_Fo_c"/>
    <property type="match status" value="1"/>
</dbReference>
<dbReference type="Gene3D" id="1.20.120.610">
    <property type="entry name" value="lithium bound rotor ring of v- atpase"/>
    <property type="match status" value="1"/>
</dbReference>
<dbReference type="HAMAP" id="MF_01396">
    <property type="entry name" value="ATP_synth_c_bact"/>
    <property type="match status" value="1"/>
</dbReference>
<dbReference type="InterPro" id="IPR005953">
    <property type="entry name" value="ATP_synth_csu_bac/chlpt"/>
</dbReference>
<dbReference type="InterPro" id="IPR000454">
    <property type="entry name" value="ATP_synth_F0_csu"/>
</dbReference>
<dbReference type="InterPro" id="IPR020537">
    <property type="entry name" value="ATP_synth_F0_csu_DDCD_BS"/>
</dbReference>
<dbReference type="InterPro" id="IPR002379">
    <property type="entry name" value="ATPase_proteolipid_c-like_dom"/>
</dbReference>
<dbReference type="InterPro" id="IPR035921">
    <property type="entry name" value="F/V-ATP_Csub_sf"/>
</dbReference>
<dbReference type="NCBIfam" id="TIGR01260">
    <property type="entry name" value="ATP_synt_c"/>
    <property type="match status" value="1"/>
</dbReference>
<dbReference type="PANTHER" id="PTHR10031">
    <property type="entry name" value="ATP SYNTHASE LIPID-BINDING PROTEIN, MITOCHONDRIAL"/>
    <property type="match status" value="1"/>
</dbReference>
<dbReference type="PANTHER" id="PTHR10031:SF0">
    <property type="entry name" value="ATPASE PROTEIN 9"/>
    <property type="match status" value="1"/>
</dbReference>
<dbReference type="Pfam" id="PF00137">
    <property type="entry name" value="ATP-synt_C"/>
    <property type="match status" value="1"/>
</dbReference>
<dbReference type="PRINTS" id="PR00124">
    <property type="entry name" value="ATPASEC"/>
</dbReference>
<dbReference type="SUPFAM" id="SSF81333">
    <property type="entry name" value="F1F0 ATP synthase subunit C"/>
    <property type="match status" value="1"/>
</dbReference>
<dbReference type="PROSITE" id="PS00605">
    <property type="entry name" value="ATPASE_C"/>
    <property type="match status" value="1"/>
</dbReference>
<feature type="chain" id="PRO_5000181801" description="ATP synthase subunit c 1">
    <location>
        <begin position="1"/>
        <end position="91"/>
    </location>
</feature>
<feature type="transmembrane region" description="Helical" evidence="1">
    <location>
        <begin position="4"/>
        <end position="24"/>
    </location>
</feature>
<feature type="transmembrane region" description="Helical" evidence="1">
    <location>
        <begin position="53"/>
        <end position="73"/>
    </location>
</feature>
<feature type="site" description="Reversibly protonated during proton transport" evidence="1">
    <location>
        <position position="59"/>
    </location>
</feature>
<gene>
    <name evidence="1" type="primary">atpE1</name>
    <name type="ordered locus">Ppro_0600</name>
</gene>
<evidence type="ECO:0000255" key="1">
    <source>
        <dbReference type="HAMAP-Rule" id="MF_01396"/>
    </source>
</evidence>
<protein>
    <recommendedName>
        <fullName evidence="1">ATP synthase subunit c 1</fullName>
    </recommendedName>
    <alternativeName>
        <fullName evidence="1">ATP synthase F(0) sector subunit c 1</fullName>
    </alternativeName>
    <alternativeName>
        <fullName evidence="1">F-type ATPase subunit c 1</fullName>
        <shortName evidence="1">F-ATPase subunit c 1</shortName>
    </alternativeName>
    <alternativeName>
        <fullName evidence="1">Lipid-binding protein 1</fullName>
    </alternativeName>
</protein>
<organism>
    <name type="scientific">Pelobacter propionicus (strain DSM 2379 / NBRC 103807 / OttBd1)</name>
    <dbReference type="NCBI Taxonomy" id="338966"/>
    <lineage>
        <taxon>Bacteria</taxon>
        <taxon>Pseudomonadati</taxon>
        <taxon>Thermodesulfobacteriota</taxon>
        <taxon>Desulfuromonadia</taxon>
        <taxon>Desulfuromonadales</taxon>
        <taxon>Desulfuromonadaceae</taxon>
        <taxon>Pelobacter</taxon>
    </lineage>
</organism>
<comment type="function">
    <text evidence="1">F(1)F(0) ATP synthase produces ATP from ADP in the presence of a proton or sodium gradient. F-type ATPases consist of two structural domains, F(1) containing the extramembraneous catalytic core and F(0) containing the membrane proton channel, linked together by a central stalk and a peripheral stalk. During catalysis, ATP synthesis in the catalytic domain of F(1) is coupled via a rotary mechanism of the central stalk subunits to proton translocation.</text>
</comment>
<comment type="function">
    <text evidence="1">Key component of the F(0) channel; it plays a direct role in translocation across the membrane. A homomeric c-ring of between 10-14 subunits forms the central stalk rotor element with the F(1) delta and epsilon subunits.</text>
</comment>
<comment type="subunit">
    <text evidence="1">F-type ATPases have 2 components, F(1) - the catalytic core - and F(0) - the membrane proton channel. F(1) has five subunits: alpha(3), beta(3), gamma(1), delta(1), epsilon(1). F(0) has three main subunits: a(1), b(2) and c(10-14). The alpha and beta chains form an alternating ring which encloses part of the gamma chain. F(1) is attached to F(0) by a central stalk formed by the gamma and epsilon chains, while a peripheral stalk is formed by the delta and b chains.</text>
</comment>
<comment type="subcellular location">
    <subcellularLocation>
        <location evidence="1">Cell inner membrane</location>
        <topology evidence="1">Multi-pass membrane protein</topology>
    </subcellularLocation>
</comment>
<comment type="similarity">
    <text evidence="1">Belongs to the ATPase C chain family.</text>
</comment>
<keyword id="KW-0066">ATP synthesis</keyword>
<keyword id="KW-0997">Cell inner membrane</keyword>
<keyword id="KW-1003">Cell membrane</keyword>
<keyword id="KW-0138">CF(0)</keyword>
<keyword id="KW-0375">Hydrogen ion transport</keyword>
<keyword id="KW-0406">Ion transport</keyword>
<keyword id="KW-0446">Lipid-binding</keyword>
<keyword id="KW-0472">Membrane</keyword>
<keyword id="KW-1185">Reference proteome</keyword>
<keyword id="KW-0812">Transmembrane</keyword>
<keyword id="KW-1133">Transmembrane helix</keyword>
<keyword id="KW-0813">Transport</keyword>
<sequence length="91" mass="9449">MNFFTMCVFGAAIGMAIGTLGTAIGQGMAVKSAVEGVARNPGAASKIMTTMMIGLAMIESLAIYALVVCLIILFANPYKDIALKMVETVAK</sequence>
<reference key="1">
    <citation type="submission" date="2006-10" db="EMBL/GenBank/DDBJ databases">
        <title>Complete sequence of chromosome of Pelobacter propionicus DSM 2379.</title>
        <authorList>
            <consortium name="US DOE Joint Genome Institute"/>
            <person name="Copeland A."/>
            <person name="Lucas S."/>
            <person name="Lapidus A."/>
            <person name="Barry K."/>
            <person name="Detter J.C."/>
            <person name="Glavina del Rio T."/>
            <person name="Hammon N."/>
            <person name="Israni S."/>
            <person name="Dalin E."/>
            <person name="Tice H."/>
            <person name="Pitluck S."/>
            <person name="Saunders E."/>
            <person name="Brettin T."/>
            <person name="Bruce D."/>
            <person name="Han C."/>
            <person name="Tapia R."/>
            <person name="Schmutz J."/>
            <person name="Larimer F."/>
            <person name="Land M."/>
            <person name="Hauser L."/>
            <person name="Kyrpides N."/>
            <person name="Kim E."/>
            <person name="Lovley D."/>
            <person name="Richardson P."/>
        </authorList>
    </citation>
    <scope>NUCLEOTIDE SEQUENCE [LARGE SCALE GENOMIC DNA]</scope>
    <source>
        <strain>DSM 2379 / NBRC 103807 / OttBd1</strain>
    </source>
</reference>
<accession>A1ALL1</accession>
<proteinExistence type="inferred from homology"/>